<organism>
    <name type="scientific">Buchnera aphidicola subsp. Acyrthosiphon pisum (strain 5A)</name>
    <dbReference type="NCBI Taxonomy" id="563178"/>
    <lineage>
        <taxon>Bacteria</taxon>
        <taxon>Pseudomonadati</taxon>
        <taxon>Pseudomonadota</taxon>
        <taxon>Gammaproteobacteria</taxon>
        <taxon>Enterobacterales</taxon>
        <taxon>Erwiniaceae</taxon>
        <taxon>Buchnera</taxon>
    </lineage>
</organism>
<proteinExistence type="inferred from homology"/>
<feature type="chain" id="PRO_1000135464" description="tRNA uridine(34) hydroxylase">
    <location>
        <begin position="1"/>
        <end position="324"/>
    </location>
</feature>
<feature type="domain" description="Rhodanese" evidence="1">
    <location>
        <begin position="145"/>
        <end position="239"/>
    </location>
</feature>
<feature type="active site" description="Cysteine persulfide intermediate" evidence="1">
    <location>
        <position position="199"/>
    </location>
</feature>
<protein>
    <recommendedName>
        <fullName evidence="1">tRNA uridine(34) hydroxylase</fullName>
        <ecNumber evidence="1">1.14.-.-</ecNumber>
    </recommendedName>
    <alternativeName>
        <fullName evidence="1">tRNA hydroxylation protein O</fullName>
    </alternativeName>
</protein>
<accession>B8D9F0</accession>
<dbReference type="EC" id="1.14.-.-" evidence="1"/>
<dbReference type="EMBL" id="CP001161">
    <property type="protein sequence ID" value="ACL30721.1"/>
    <property type="molecule type" value="Genomic_DNA"/>
</dbReference>
<dbReference type="RefSeq" id="WP_009874322.1">
    <property type="nucleotide sequence ID" value="NC_011833.1"/>
</dbReference>
<dbReference type="SMR" id="B8D9F0"/>
<dbReference type="KEGG" id="bap:BUAP5A_358"/>
<dbReference type="HOGENOM" id="CLU_038878_1_1_6"/>
<dbReference type="OrthoDB" id="9778326at2"/>
<dbReference type="Proteomes" id="UP000006904">
    <property type="component" value="Chromosome"/>
</dbReference>
<dbReference type="GO" id="GO:0016705">
    <property type="term" value="F:oxidoreductase activity, acting on paired donors, with incorporation or reduction of molecular oxygen"/>
    <property type="evidence" value="ECO:0007669"/>
    <property type="project" value="UniProtKB-UniRule"/>
</dbReference>
<dbReference type="GO" id="GO:0006400">
    <property type="term" value="P:tRNA modification"/>
    <property type="evidence" value="ECO:0007669"/>
    <property type="project" value="UniProtKB-UniRule"/>
</dbReference>
<dbReference type="CDD" id="cd01518">
    <property type="entry name" value="RHOD_YceA"/>
    <property type="match status" value="1"/>
</dbReference>
<dbReference type="Gene3D" id="3.30.70.100">
    <property type="match status" value="1"/>
</dbReference>
<dbReference type="Gene3D" id="3.40.250.10">
    <property type="entry name" value="Rhodanese-like domain"/>
    <property type="match status" value="1"/>
</dbReference>
<dbReference type="HAMAP" id="MF_00469">
    <property type="entry name" value="TrhO"/>
    <property type="match status" value="1"/>
</dbReference>
<dbReference type="InterPro" id="IPR001763">
    <property type="entry name" value="Rhodanese-like_dom"/>
</dbReference>
<dbReference type="InterPro" id="IPR036873">
    <property type="entry name" value="Rhodanese-like_dom_sf"/>
</dbReference>
<dbReference type="InterPro" id="IPR022111">
    <property type="entry name" value="Rhodanese_C"/>
</dbReference>
<dbReference type="InterPro" id="IPR020936">
    <property type="entry name" value="TrhO"/>
</dbReference>
<dbReference type="InterPro" id="IPR040503">
    <property type="entry name" value="TRHO_N"/>
</dbReference>
<dbReference type="NCBIfam" id="NF001133">
    <property type="entry name" value="PRK00142.1-1"/>
    <property type="match status" value="1"/>
</dbReference>
<dbReference type="PANTHER" id="PTHR43846:SF1">
    <property type="entry name" value="TRNA URIDINE(34) HYDROXYLASE"/>
    <property type="match status" value="1"/>
</dbReference>
<dbReference type="PANTHER" id="PTHR43846">
    <property type="entry name" value="UPF0176 PROTEIN YCEA"/>
    <property type="match status" value="1"/>
</dbReference>
<dbReference type="Pfam" id="PF00581">
    <property type="entry name" value="Rhodanese"/>
    <property type="match status" value="1"/>
</dbReference>
<dbReference type="Pfam" id="PF12368">
    <property type="entry name" value="Rhodanese_C"/>
    <property type="match status" value="1"/>
</dbReference>
<dbReference type="Pfam" id="PF17773">
    <property type="entry name" value="UPF0176_N"/>
    <property type="match status" value="1"/>
</dbReference>
<dbReference type="SMART" id="SM00450">
    <property type="entry name" value="RHOD"/>
    <property type="match status" value="1"/>
</dbReference>
<dbReference type="SUPFAM" id="SSF52821">
    <property type="entry name" value="Rhodanese/Cell cycle control phosphatase"/>
    <property type="match status" value="1"/>
</dbReference>
<dbReference type="PROSITE" id="PS50206">
    <property type="entry name" value="RHODANESE_3"/>
    <property type="match status" value="1"/>
</dbReference>
<name>TRHO_BUCA5</name>
<reference key="1">
    <citation type="journal article" date="2009" name="Science">
        <title>The dynamics and time scale of ongoing genomic erosion in symbiotic bacteria.</title>
        <authorList>
            <person name="Moran N.A."/>
            <person name="McLaughlin H.J."/>
            <person name="Sorek R."/>
        </authorList>
    </citation>
    <scope>NUCLEOTIDE SEQUENCE [LARGE SCALE GENOMIC DNA]</scope>
    <source>
        <strain>5A</strain>
    </source>
</reference>
<keyword id="KW-0560">Oxidoreductase</keyword>
<keyword id="KW-0819">tRNA processing</keyword>
<comment type="function">
    <text evidence="1">Catalyzes oxygen-dependent 5-hydroxyuridine (ho5U) modification at position 34 in tRNAs.</text>
</comment>
<comment type="catalytic activity">
    <reaction evidence="1">
        <text>uridine(34) in tRNA + AH2 + O2 = 5-hydroxyuridine(34) in tRNA + A + H2O</text>
        <dbReference type="Rhea" id="RHEA:64224"/>
        <dbReference type="Rhea" id="RHEA-COMP:11727"/>
        <dbReference type="Rhea" id="RHEA-COMP:13381"/>
        <dbReference type="ChEBI" id="CHEBI:13193"/>
        <dbReference type="ChEBI" id="CHEBI:15377"/>
        <dbReference type="ChEBI" id="CHEBI:15379"/>
        <dbReference type="ChEBI" id="CHEBI:17499"/>
        <dbReference type="ChEBI" id="CHEBI:65315"/>
        <dbReference type="ChEBI" id="CHEBI:136877"/>
    </reaction>
</comment>
<comment type="similarity">
    <text evidence="1">Belongs to the TrhO family.</text>
</comment>
<evidence type="ECO:0000255" key="1">
    <source>
        <dbReference type="HAMAP-Rule" id="MF_00469"/>
    </source>
</evidence>
<sequence>MSILHNIVSKKELKRRMFFETEPRLTLSFYKYFFIKNTQEYRDRLYKNFYKYNVLGRIYVASEGINAQISVPKKYYSILKKFLYNFDIELNNLRINKSLDNEKSFWVLCVKIKKKIVQDGIKEHFFNPNNVGIYIQSEQVNSMLNDKKTIFIDMRNSYEYAIGHFENAIEIKSITFREQLKKVIQLMAYAKNKKIVMYCTGGIRCEKATSWMLFNGFKHVYHLEGGIIGYVHDARKNGLPVLFKGKSFVFDNRMSEKISDEVISYCKQCGKSSDVYINCKYSSCHLLFIQCENCSVKFHSCCSLECMKKYNFYMLNNDLKKISY</sequence>
<gene>
    <name evidence="1" type="primary">trhO</name>
    <name type="ordered locus">BUAP5A_358</name>
</gene>